<sequence length="1733" mass="172167">MNLFRPLSHRLSLPSTTTTRDHHHQQHHHHPPPPPSRTHFTTITTSGRWLQRQFPVLTTTVFFSLFLSFPPHPPRPPQDHHRPTPARDHRDPRDHLPPTRTRRDHQHRPPPTTTTTTIKDPQHPQDPLLLPTKTLQEEDPHLLRPTRDPPSAKTHHHQDPPGGGPPSTSSHHHHQDPPGGGPPSPPPRPSTSSSSSHQGPPSTRPPPPQRPPPRWPPPSPQKISETRAGSENTAQTLFSHSENKLFSHPMGEGGEGDRGTAGGGEGDRDDPPPPSPPPRPPPPLPPPPPPPPPPQPPPAGGSARRRRRGGGPPGRGGRRRGGKRRRAEGTEAAAADAEEEEDGDGDEDEDEDRAEGEGREDGGEGPRGAGGGAGESESESGRAEGAPRSAEQQVGVAGVLGLLVVRDGLHLDGPERAAGPAVAAADADDLHRVPVLAGAGPGARGPRGPVGLHGAPGGGADAGLEGGKVPEHGRRGARGGDGARGQHQRGGLGVGLQQRRGAEGAQLGRQALGAAELGEAPAAAGDEDGPQRGAEPPAVGRAVPEGGARVKVRVPEPERGALAGHVLAAVHGGEHALAVGARRQRDRGPGPGAGAHRVAHVVLAAEAQRLGPGVQAGEGGLHAGEAGRAHDGARVQHGRAELAAPGPAHGALGGRVQADADVDVVVPHGRAVRGPVLDGVQHDEPAPRRAEPRAEVLHGAGEAEVPRREQQHPLGVEAADVGAPGPVPGPGVRVRRAEAVGEGGEQRREAAAARVPGRARGALGGLGAELLVGQRVVEHHHAHVLGVGYLPHPGGAAAERGAAARGDVRQGGRVEGERRAPEFGEDLLVHEGAGHLGRAVGGEGRLGGPRRVGLAGRDAAEAAVGRGVLGHGPERAPEPVVLGGGGGGGQQRGSGVRSGPESEGAALAPGPPVLFVVAVAVAVPAEGRAGEPLVLLAVPGAAGPGRAALLLAPLGRWVRAGGGGAGVAGGAGEAGLGAGAGLGAGAGLGAGGAGGPGAGEAGGGARRRRRRRWDDEAGLLGPERGQAGRGLRGPGPRGGLGEPGRGHVGRGEEGRGVGPGGLAGAGPVHAVAHQRRHGAGDEGDRVRGLPPLGRAGPGDRVAEREQRGRHLLEAGGPEGGRGAGGRGQPERAGQQALEDAAAGQDAGVRQLAGHAAGLRGGEGGADAGAEGLDGRLPGAGVRGAARVGHVGVGPAEALQDEGLLGAIVAAAHGHGAHRVRQGPERVLGGHGVPDVRQRRGHAAGDEGAVAVGRVDPALAELVEALVGGLHPRVLQPGHGLAGGPAVDEAHEGLVLLPRVPHLRDEDGHGPGRGAVAGRGLADVVLVPEPLAGVPGAAVADAAVGRRVGAGPGLPERGEQRPVGRRGPVGHEREVVVGGAALPARGPGGLRGRGRGGRGGGGGGGGRGPRGRGGRRRRRWRPGAGEWGAGPDSFVFFSLGGGRGRGGRGGRGGRGRGGGRAPRGGGGGPGGGGRAGRGEVRVAAAAAGAAEAAAAAEGALSGAAPAGLSLRGRPAVPGEAESVLVLLGAAGDGLDGDGGGGVGVGVGVGGDGAPGAKRPRIEPPRGGGLVEQGLAVLVMVTTAVPSGGGGAAAAGRRDRPGGGGGWGSGPPPCRRCGHRCWLCWWRRGPRPRRRPGLTDRVPPRGGPSPRGCRGAGRAGGGGRGGCGGGRAPGAAGGPGLCRCECCRGRRPGPGAGPGPGPEDEVTVLGALMESPTGGPGGRGPGLVLLLVFVV</sequence>
<dbReference type="EMBL" id="M34651">
    <property type="protein sequence ID" value="AAA47471.1"/>
    <property type="molecule type" value="Genomic_DNA"/>
</dbReference>
<dbReference type="PIR" id="B45344">
    <property type="entry name" value="B45344"/>
</dbReference>
<dbReference type="PRINTS" id="PR01217">
    <property type="entry name" value="PRICHEXTENSN"/>
</dbReference>
<evidence type="ECO:0000256" key="1">
    <source>
        <dbReference type="SAM" id="MobiDB-lite"/>
    </source>
</evidence>
<organismHost>
    <name type="scientific">Sus scrofa</name>
    <name type="common">Pig</name>
    <dbReference type="NCBI Taxonomy" id="9823"/>
</organismHost>
<feature type="chain" id="PRO_0000116282" description="Probable nuclear antigen">
    <location>
        <begin position="1"/>
        <end position="1733"/>
    </location>
</feature>
<feature type="region of interest" description="Disordered" evidence="1">
    <location>
        <begin position="1"/>
        <end position="41"/>
    </location>
</feature>
<feature type="region of interest" description="Disordered" evidence="1">
    <location>
        <begin position="71"/>
        <end position="394"/>
    </location>
</feature>
<feature type="region of interest" description="Disordered" evidence="1">
    <location>
        <begin position="437"/>
        <end position="506"/>
    </location>
</feature>
<feature type="region of interest" description="Disordered" evidence="1">
    <location>
        <begin position="520"/>
        <end position="548"/>
    </location>
</feature>
<feature type="region of interest" description="Disordered" evidence="1">
    <location>
        <begin position="882"/>
        <end position="907"/>
    </location>
</feature>
<feature type="region of interest" description="Disordered" evidence="1">
    <location>
        <begin position="993"/>
        <end position="1141"/>
    </location>
</feature>
<feature type="region of interest" description="Disordered" evidence="1">
    <location>
        <begin position="1223"/>
        <end position="1242"/>
    </location>
</feature>
<feature type="region of interest" description="Disordered" evidence="1">
    <location>
        <begin position="1348"/>
        <end position="1475"/>
    </location>
</feature>
<feature type="region of interest" description="Disordered" evidence="1">
    <location>
        <begin position="1585"/>
        <end position="1608"/>
    </location>
</feature>
<feature type="region of interest" description="Disordered" evidence="1">
    <location>
        <begin position="1630"/>
        <end position="1665"/>
    </location>
</feature>
<feature type="compositionally biased region" description="Basic residues" evidence="1">
    <location>
        <begin position="21"/>
        <end position="31"/>
    </location>
</feature>
<feature type="compositionally biased region" description="Basic and acidic residues" evidence="1">
    <location>
        <begin position="77"/>
        <end position="97"/>
    </location>
</feature>
<feature type="compositionally biased region" description="Low complexity" evidence="1">
    <location>
        <begin position="113"/>
        <end position="131"/>
    </location>
</feature>
<feature type="compositionally biased region" description="Basic and acidic residues" evidence="1">
    <location>
        <begin position="135"/>
        <end position="147"/>
    </location>
</feature>
<feature type="compositionally biased region" description="Pro residues" evidence="1">
    <location>
        <begin position="179"/>
        <end position="189"/>
    </location>
</feature>
<feature type="compositionally biased region" description="Low complexity" evidence="1">
    <location>
        <begin position="190"/>
        <end position="201"/>
    </location>
</feature>
<feature type="compositionally biased region" description="Pro residues" evidence="1">
    <location>
        <begin position="202"/>
        <end position="220"/>
    </location>
</feature>
<feature type="compositionally biased region" description="Polar residues" evidence="1">
    <location>
        <begin position="227"/>
        <end position="240"/>
    </location>
</feature>
<feature type="compositionally biased region" description="Pro residues" evidence="1">
    <location>
        <begin position="272"/>
        <end position="299"/>
    </location>
</feature>
<feature type="compositionally biased region" description="Basic residues" evidence="1">
    <location>
        <begin position="316"/>
        <end position="326"/>
    </location>
</feature>
<feature type="compositionally biased region" description="Acidic residues" evidence="1">
    <location>
        <begin position="336"/>
        <end position="354"/>
    </location>
</feature>
<feature type="compositionally biased region" description="Basic and acidic residues" evidence="1">
    <location>
        <begin position="355"/>
        <end position="364"/>
    </location>
</feature>
<feature type="compositionally biased region" description="Gly residues" evidence="1">
    <location>
        <begin position="365"/>
        <end position="374"/>
    </location>
</feature>
<feature type="compositionally biased region" description="Gly residues" evidence="1">
    <location>
        <begin position="454"/>
        <end position="466"/>
    </location>
</feature>
<feature type="compositionally biased region" description="Gly residues" evidence="1">
    <location>
        <begin position="479"/>
        <end position="494"/>
    </location>
</feature>
<feature type="compositionally biased region" description="Low complexity" evidence="1">
    <location>
        <begin position="495"/>
        <end position="506"/>
    </location>
</feature>
<feature type="compositionally biased region" description="Gly residues" evidence="1">
    <location>
        <begin position="882"/>
        <end position="892"/>
    </location>
</feature>
<feature type="compositionally biased region" description="Low complexity" evidence="1">
    <location>
        <begin position="893"/>
        <end position="907"/>
    </location>
</feature>
<feature type="compositionally biased region" description="Gly residues" evidence="1">
    <location>
        <begin position="993"/>
        <end position="1004"/>
    </location>
</feature>
<feature type="compositionally biased region" description="Gly residues" evidence="1">
    <location>
        <begin position="1027"/>
        <end position="1043"/>
    </location>
</feature>
<feature type="compositionally biased region" description="Basic and acidic residues" evidence="1">
    <location>
        <begin position="1078"/>
        <end position="1087"/>
    </location>
</feature>
<feature type="compositionally biased region" description="Basic and acidic residues" evidence="1">
    <location>
        <begin position="1100"/>
        <end position="1112"/>
    </location>
</feature>
<feature type="compositionally biased region" description="Gly residues" evidence="1">
    <location>
        <begin position="1116"/>
        <end position="1127"/>
    </location>
</feature>
<feature type="compositionally biased region" description="Gly residues" evidence="1">
    <location>
        <begin position="1385"/>
        <end position="1407"/>
    </location>
</feature>
<feature type="compositionally biased region" description="Basic residues" evidence="1">
    <location>
        <begin position="1408"/>
        <end position="1420"/>
    </location>
</feature>
<feature type="compositionally biased region" description="Basic residues" evidence="1">
    <location>
        <begin position="1444"/>
        <end position="1453"/>
    </location>
</feature>
<feature type="compositionally biased region" description="Gly residues" evidence="1">
    <location>
        <begin position="1454"/>
        <end position="1474"/>
    </location>
</feature>
<feature type="compositionally biased region" description="Gly residues" evidence="1">
    <location>
        <begin position="1652"/>
        <end position="1665"/>
    </location>
</feature>
<proteinExistence type="predicted"/>
<name>VNUA_SUHVK</name>
<protein>
    <recommendedName>
        <fullName>Probable nuclear antigen</fullName>
    </recommendedName>
</protein>
<accession>P33485</accession>
<organism>
    <name type="scientific">Suid herpesvirus 1 (strain Kaplan)</name>
    <name type="common">SuHV-1</name>
    <name type="synonym">Pseudorabies virus (strain Kaplan)</name>
    <dbReference type="NCBI Taxonomy" id="33703"/>
    <lineage>
        <taxon>Viruses</taxon>
        <taxon>Duplodnaviria</taxon>
        <taxon>Heunggongvirae</taxon>
        <taxon>Peploviricota</taxon>
        <taxon>Herviviricetes</taxon>
        <taxon>Herpesvirales</taxon>
        <taxon>Orthoherpesviridae</taxon>
        <taxon>Alphaherpesvirinae</taxon>
        <taxon>Varicellovirus</taxon>
        <taxon>Varicellovirus suidalpha1</taxon>
        <taxon>Suid herpesvirus 1</taxon>
    </lineage>
</organism>
<reference key="1">
    <citation type="journal article" date="1990" name="Virology">
        <title>Pseudorabies virus immediate-early gene overlaps with an oppositely oriented open reading frame: characterization of their promoter and enhancer regions.</title>
        <authorList>
            <person name="Vlcek C."/>
            <person name="Kozmik Z."/>
            <person name="Paces V."/>
            <person name="Schirm S."/>
            <person name="Schwyzer M."/>
        </authorList>
    </citation>
    <scope>NUCLEOTIDE SEQUENCE [GENOMIC DNA]</scope>
</reference>